<keyword id="KW-0028">Amino-acid biosynthesis</keyword>
<keyword id="KW-0223">Dioxygenase</keyword>
<keyword id="KW-0408">Iron</keyword>
<keyword id="KW-0479">Metal-binding</keyword>
<keyword id="KW-0486">Methionine biosynthesis</keyword>
<keyword id="KW-0533">Nickel</keyword>
<keyword id="KW-0560">Oxidoreductase</keyword>
<comment type="function">
    <text evidence="1">Catalyzes 2 different reactions between oxygen and the acireductone 1,2-dihydroxy-3-keto-5-methylthiopentene (DHK-MTPene) depending upon the metal bound in the active site. Fe-containing acireductone dioxygenase (Fe-ARD) produces formate and 2-keto-4-methylthiobutyrate (KMTB), the alpha-ketoacid precursor of methionine in the methionine recycle pathway. Ni-containing acireductone dioxygenase (Ni-ARD) produces methylthiopropionate, carbon monoxide and formate, and does not lie on the methionine recycle pathway.</text>
</comment>
<comment type="catalytic activity">
    <reaction evidence="1">
        <text>1,2-dihydroxy-5-(methylsulfanyl)pent-1-en-3-one + O2 = 3-(methylsulfanyl)propanoate + CO + formate + 2 H(+)</text>
        <dbReference type="Rhea" id="RHEA:14161"/>
        <dbReference type="ChEBI" id="CHEBI:15378"/>
        <dbReference type="ChEBI" id="CHEBI:15379"/>
        <dbReference type="ChEBI" id="CHEBI:15740"/>
        <dbReference type="ChEBI" id="CHEBI:17245"/>
        <dbReference type="ChEBI" id="CHEBI:49016"/>
        <dbReference type="ChEBI" id="CHEBI:49252"/>
        <dbReference type="EC" id="1.13.11.53"/>
    </reaction>
</comment>
<comment type="catalytic activity">
    <reaction evidence="1">
        <text>1,2-dihydroxy-5-(methylsulfanyl)pent-1-en-3-one + O2 = 4-methylsulfanyl-2-oxobutanoate + formate + 2 H(+)</text>
        <dbReference type="Rhea" id="RHEA:24504"/>
        <dbReference type="ChEBI" id="CHEBI:15378"/>
        <dbReference type="ChEBI" id="CHEBI:15379"/>
        <dbReference type="ChEBI" id="CHEBI:15740"/>
        <dbReference type="ChEBI" id="CHEBI:16723"/>
        <dbReference type="ChEBI" id="CHEBI:49252"/>
        <dbReference type="EC" id="1.13.11.54"/>
    </reaction>
</comment>
<comment type="cofactor">
    <cofactor evidence="1">
        <name>Fe(2+)</name>
        <dbReference type="ChEBI" id="CHEBI:29033"/>
    </cofactor>
    <text evidence="1">Binds 1 Fe(2+) cation per monomer.</text>
</comment>
<comment type="cofactor">
    <cofactor evidence="1">
        <name>Ni(2+)</name>
        <dbReference type="ChEBI" id="CHEBI:49786"/>
    </cofactor>
    <text evidence="1">Binds 1 nickel ion per monomer.</text>
</comment>
<comment type="pathway">
    <text evidence="1">Amino-acid biosynthesis; L-methionine biosynthesis via salvage pathway; L-methionine from S-methyl-5-thio-alpha-D-ribose 1-phosphate: step 5/6.</text>
</comment>
<comment type="subunit">
    <text evidence="1">Monomer.</text>
</comment>
<comment type="similarity">
    <text evidence="1">Belongs to the acireductone dioxygenase (ARD) family.</text>
</comment>
<proteinExistence type="inferred from homology"/>
<protein>
    <recommendedName>
        <fullName evidence="1">Acireductone dioxygenase</fullName>
    </recommendedName>
    <alternativeName>
        <fullName evidence="1">1,2-dihydroxy-3-keto-5-methylthiopentene dioxygenase</fullName>
        <shortName evidence="1">DHK-MTPene dioxygenase</shortName>
    </alternativeName>
    <alternativeName>
        <fullName evidence="1">Acireductone dioxygenase (Fe(2+)-requiring)</fullName>
        <shortName evidence="1">ARD'</shortName>
        <shortName evidence="1">Fe-ARD</shortName>
        <ecNumber evidence="1">1.13.11.54</ecNumber>
    </alternativeName>
    <alternativeName>
        <fullName evidence="1">Acireductone dioxygenase (Ni(2+)-requiring)</fullName>
        <shortName evidence="1">ARD</shortName>
        <shortName evidence="1">Ni-ARD</shortName>
        <ecNumber evidence="1">1.13.11.53</ecNumber>
    </alternativeName>
</protein>
<accession>A8YMJ4</accession>
<evidence type="ECO:0000255" key="1">
    <source>
        <dbReference type="HAMAP-Rule" id="MF_01682"/>
    </source>
</evidence>
<sequence>MAILRLENGTTYTQLADISLELAKLNVTLNYWPIENEATRQLLKEASLTDEEKEIVLTSLDGYFEQLKQEAGYQARDLIVLHPDIANLDTLLAKFERCHTHADDEVRYIIDGEGVFGFVFPDGSQGELTIQPQEYINVPAHSEHWFHLTASKRVKAVRYFTTTAGWVPEYTETVIRFPSLTAV</sequence>
<feature type="chain" id="PRO_0000359210" description="Acireductone dioxygenase">
    <location>
        <begin position="1"/>
        <end position="183"/>
    </location>
</feature>
<feature type="binding site" evidence="1">
    <location>
        <position position="99"/>
    </location>
    <ligand>
        <name>Fe(2+)</name>
        <dbReference type="ChEBI" id="CHEBI:29033"/>
    </ligand>
</feature>
<feature type="binding site" evidence="1">
    <location>
        <position position="99"/>
    </location>
    <ligand>
        <name>Ni(2+)</name>
        <dbReference type="ChEBI" id="CHEBI:49786"/>
    </ligand>
</feature>
<feature type="binding site" evidence="1">
    <location>
        <position position="101"/>
    </location>
    <ligand>
        <name>Fe(2+)</name>
        <dbReference type="ChEBI" id="CHEBI:29033"/>
    </ligand>
</feature>
<feature type="binding site" evidence="1">
    <location>
        <position position="101"/>
    </location>
    <ligand>
        <name>Ni(2+)</name>
        <dbReference type="ChEBI" id="CHEBI:49786"/>
    </ligand>
</feature>
<feature type="binding site" evidence="1">
    <location>
        <position position="105"/>
    </location>
    <ligand>
        <name>Fe(2+)</name>
        <dbReference type="ChEBI" id="CHEBI:29033"/>
    </ligand>
</feature>
<feature type="binding site" evidence="1">
    <location>
        <position position="105"/>
    </location>
    <ligand>
        <name>Ni(2+)</name>
        <dbReference type="ChEBI" id="CHEBI:49786"/>
    </ligand>
</feature>
<feature type="binding site" evidence="1">
    <location>
        <position position="144"/>
    </location>
    <ligand>
        <name>Fe(2+)</name>
        <dbReference type="ChEBI" id="CHEBI:29033"/>
    </ligand>
</feature>
<feature type="binding site" evidence="1">
    <location>
        <position position="144"/>
    </location>
    <ligand>
        <name>Ni(2+)</name>
        <dbReference type="ChEBI" id="CHEBI:49786"/>
    </ligand>
</feature>
<feature type="site" description="May play a role in transmitting local conformational changes" evidence="1">
    <location>
        <position position="104"/>
    </location>
</feature>
<feature type="site" description="Important to generate the dianion" evidence="1">
    <location>
        <position position="107"/>
    </location>
</feature>
<dbReference type="EC" id="1.13.11.54" evidence="1"/>
<dbReference type="EC" id="1.13.11.53" evidence="1"/>
<dbReference type="EMBL" id="AM778957">
    <property type="protein sequence ID" value="CAO91421.1"/>
    <property type="molecule type" value="Genomic_DNA"/>
</dbReference>
<dbReference type="SMR" id="A8YMJ4"/>
<dbReference type="UniPathway" id="UPA00904">
    <property type="reaction ID" value="UER00878"/>
</dbReference>
<dbReference type="GO" id="GO:0010308">
    <property type="term" value="F:acireductone dioxygenase (Ni2+-requiring) activity"/>
    <property type="evidence" value="ECO:0007669"/>
    <property type="project" value="UniProtKB-UniRule"/>
</dbReference>
<dbReference type="GO" id="GO:0010309">
    <property type="term" value="F:acireductone dioxygenase [iron(II)-requiring] activity"/>
    <property type="evidence" value="ECO:0007669"/>
    <property type="project" value="UniProtKB-UniRule"/>
</dbReference>
<dbReference type="GO" id="GO:0005506">
    <property type="term" value="F:iron ion binding"/>
    <property type="evidence" value="ECO:0007669"/>
    <property type="project" value="UniProtKB-UniRule"/>
</dbReference>
<dbReference type="GO" id="GO:0016151">
    <property type="term" value="F:nickel cation binding"/>
    <property type="evidence" value="ECO:0007669"/>
    <property type="project" value="UniProtKB-UniRule"/>
</dbReference>
<dbReference type="GO" id="GO:0019509">
    <property type="term" value="P:L-methionine salvage from methylthioadenosine"/>
    <property type="evidence" value="ECO:0007669"/>
    <property type="project" value="UniProtKB-UniRule"/>
</dbReference>
<dbReference type="GO" id="GO:0019284">
    <property type="term" value="P:L-methionine salvage from S-adenosylmethionine"/>
    <property type="evidence" value="ECO:0007669"/>
    <property type="project" value="InterPro"/>
</dbReference>
<dbReference type="CDD" id="cd02232">
    <property type="entry name" value="cupin_ARD"/>
    <property type="match status" value="1"/>
</dbReference>
<dbReference type="Gene3D" id="2.60.120.10">
    <property type="entry name" value="Jelly Rolls"/>
    <property type="match status" value="1"/>
</dbReference>
<dbReference type="HAMAP" id="MF_01682">
    <property type="entry name" value="Salvage_MtnD"/>
    <property type="match status" value="1"/>
</dbReference>
<dbReference type="InterPro" id="IPR004313">
    <property type="entry name" value="ARD"/>
</dbReference>
<dbReference type="InterPro" id="IPR023956">
    <property type="entry name" value="ARD_bac"/>
</dbReference>
<dbReference type="InterPro" id="IPR014710">
    <property type="entry name" value="RmlC-like_jellyroll"/>
</dbReference>
<dbReference type="InterPro" id="IPR011051">
    <property type="entry name" value="RmlC_Cupin_sf"/>
</dbReference>
<dbReference type="PANTHER" id="PTHR23418">
    <property type="entry name" value="ACIREDUCTONE DIOXYGENASE"/>
    <property type="match status" value="1"/>
</dbReference>
<dbReference type="PANTHER" id="PTHR23418:SF0">
    <property type="entry name" value="ACIREDUCTONE DIOXYGENASE"/>
    <property type="match status" value="1"/>
</dbReference>
<dbReference type="Pfam" id="PF03079">
    <property type="entry name" value="ARD"/>
    <property type="match status" value="1"/>
</dbReference>
<dbReference type="SUPFAM" id="SSF51182">
    <property type="entry name" value="RmlC-like cupins"/>
    <property type="match status" value="1"/>
</dbReference>
<reference key="1">
    <citation type="journal article" date="2008" name="BMC Genomics">
        <title>Highly plastic genome of Microcystis aeruginosa PCC 7806, a ubiquitous toxic freshwater cyanobacterium.</title>
        <authorList>
            <person name="Frangeul L."/>
            <person name="Quillardet P."/>
            <person name="Castets A.M."/>
            <person name="Humbert J.F."/>
            <person name="Matthijs H.C."/>
            <person name="Cortez D."/>
            <person name="Tolonen A."/>
            <person name="Zhang C.C."/>
            <person name="Gribaldo S."/>
            <person name="Kehr J.C."/>
            <person name="Zilliges Y."/>
            <person name="Ziemert N."/>
            <person name="Becker S."/>
            <person name="Talla E."/>
            <person name="Latifi A."/>
            <person name="Billault A."/>
            <person name="Lepelletier A."/>
            <person name="Dittmann E."/>
            <person name="Bouchier C."/>
            <person name="de Marsac N.T."/>
        </authorList>
    </citation>
    <scope>NUCLEOTIDE SEQUENCE [LARGE SCALE GENOMIC DNA]</scope>
    <source>
        <strain>PCC 7806</strain>
    </source>
</reference>
<name>MTND_MICAE</name>
<organism>
    <name type="scientific">Microcystis aeruginosa</name>
    <dbReference type="NCBI Taxonomy" id="1126"/>
    <lineage>
        <taxon>Bacteria</taxon>
        <taxon>Bacillati</taxon>
        <taxon>Cyanobacteriota</taxon>
        <taxon>Cyanophyceae</taxon>
        <taxon>Oscillatoriophycideae</taxon>
        <taxon>Chroococcales</taxon>
        <taxon>Microcystaceae</taxon>
        <taxon>Microcystis</taxon>
    </lineage>
</organism>
<gene>
    <name evidence="1" type="primary">mtnD</name>
    <name type="ORF">IPF_3733</name>
</gene>